<protein>
    <recommendedName>
        <fullName evidence="1">Photosystem II reaction center protein I</fullName>
        <shortName evidence="1">PSII-I</shortName>
    </recommendedName>
    <alternativeName>
        <fullName evidence="1">PSII 4.8 kDa protein</fullName>
    </alternativeName>
</protein>
<reference key="1">
    <citation type="journal article" date="2002" name="Proc. Natl. Acad. Sci. U.S.A.">
        <title>The chloroplast and mitochondrial genome sequences of the charophyte Chaetosphaeridium globosum: insights into the timing of the events that restructured organelle DNAs within the green algal lineage that led to land plants.</title>
        <authorList>
            <person name="Turmel M."/>
            <person name="Otis C."/>
            <person name="Lemieux C."/>
        </authorList>
    </citation>
    <scope>NUCLEOTIDE SEQUENCE [LARGE SCALE GENOMIC DNA]</scope>
    <source>
        <strain>M1311</strain>
    </source>
</reference>
<sequence length="37" mass="4295">MLTLKIFVYTVVIFFVSLFIFGFLSNDPARNPGRKEN</sequence>
<gene>
    <name evidence="1" type="primary">psbI</name>
</gene>
<keyword id="KW-0150">Chloroplast</keyword>
<keyword id="KW-0472">Membrane</keyword>
<keyword id="KW-0602">Photosynthesis</keyword>
<keyword id="KW-0604">Photosystem II</keyword>
<keyword id="KW-0934">Plastid</keyword>
<keyword id="KW-0674">Reaction center</keyword>
<keyword id="KW-0793">Thylakoid</keyword>
<keyword id="KW-0812">Transmembrane</keyword>
<keyword id="KW-1133">Transmembrane helix</keyword>
<name>PSBI_CHAGL</name>
<organism>
    <name type="scientific">Chaetosphaeridium globosum</name>
    <name type="common">Charophycean green alga</name>
    <name type="synonym">Herposteiron globosum</name>
    <dbReference type="NCBI Taxonomy" id="96477"/>
    <lineage>
        <taxon>Eukaryota</taxon>
        <taxon>Viridiplantae</taxon>
        <taxon>Streptophyta</taxon>
        <taxon>Coleochaetophyceae</taxon>
        <taxon>Coleochaetales</taxon>
        <taxon>Chaetosphaeridiaceae</taxon>
        <taxon>Chaetosphaeridium</taxon>
    </lineage>
</organism>
<feature type="chain" id="PRO_0000219620" description="Photosystem II reaction center protein I">
    <location>
        <begin position="1"/>
        <end position="37"/>
    </location>
</feature>
<feature type="transmembrane region" description="Helical" evidence="1">
    <location>
        <begin position="4"/>
        <end position="24"/>
    </location>
</feature>
<evidence type="ECO:0000255" key="1">
    <source>
        <dbReference type="HAMAP-Rule" id="MF_01316"/>
    </source>
</evidence>
<dbReference type="EMBL" id="AF494278">
    <property type="protein sequence ID" value="AAM96545.1"/>
    <property type="molecule type" value="Genomic_DNA"/>
</dbReference>
<dbReference type="RefSeq" id="NP_683787.1">
    <property type="nucleotide sequence ID" value="NC_004115.1"/>
</dbReference>
<dbReference type="SMR" id="Q8M9Z9"/>
<dbReference type="GeneID" id="860701"/>
<dbReference type="GO" id="GO:0009535">
    <property type="term" value="C:chloroplast thylakoid membrane"/>
    <property type="evidence" value="ECO:0007669"/>
    <property type="project" value="UniProtKB-SubCell"/>
</dbReference>
<dbReference type="GO" id="GO:0009539">
    <property type="term" value="C:photosystem II reaction center"/>
    <property type="evidence" value="ECO:0007669"/>
    <property type="project" value="InterPro"/>
</dbReference>
<dbReference type="GO" id="GO:0015979">
    <property type="term" value="P:photosynthesis"/>
    <property type="evidence" value="ECO:0007669"/>
    <property type="project" value="UniProtKB-UniRule"/>
</dbReference>
<dbReference type="HAMAP" id="MF_01316">
    <property type="entry name" value="PSII_PsbI"/>
    <property type="match status" value="1"/>
</dbReference>
<dbReference type="InterPro" id="IPR003686">
    <property type="entry name" value="PSII_PsbI"/>
</dbReference>
<dbReference type="InterPro" id="IPR037271">
    <property type="entry name" value="PSII_PsbI_sf"/>
</dbReference>
<dbReference type="NCBIfam" id="NF002735">
    <property type="entry name" value="PRK02655.1"/>
    <property type="match status" value="1"/>
</dbReference>
<dbReference type="PANTHER" id="PTHR35772">
    <property type="entry name" value="PHOTOSYSTEM II REACTION CENTER PROTEIN I"/>
    <property type="match status" value="1"/>
</dbReference>
<dbReference type="PANTHER" id="PTHR35772:SF1">
    <property type="entry name" value="PHOTOSYSTEM II REACTION CENTER PROTEIN I"/>
    <property type="match status" value="1"/>
</dbReference>
<dbReference type="Pfam" id="PF02532">
    <property type="entry name" value="PsbI"/>
    <property type="match status" value="1"/>
</dbReference>
<dbReference type="SUPFAM" id="SSF161041">
    <property type="entry name" value="Photosystem II reaction center protein I, PsbI"/>
    <property type="match status" value="1"/>
</dbReference>
<comment type="function">
    <text evidence="1">One of the components of the core complex of photosystem II (PSII), required for its stability and/or assembly. PSII is a light-driven water:plastoquinone oxidoreductase that uses light energy to abstract electrons from H(2)O, generating O(2) and a proton gradient subsequently used for ATP formation. It consists of a core antenna complex that captures photons, and an electron transfer chain that converts photonic excitation into a charge separation.</text>
</comment>
<comment type="subunit">
    <text evidence="1">PSII is composed of 1 copy each of membrane proteins PsbA, PsbB, PsbC, PsbD, PsbE, PsbF, PsbH, PsbI, PsbJ, PsbK, PsbL, PsbM, PsbT, PsbX, PsbY, PsbZ, Psb30/Ycf12, at least 3 peripheral proteins of the oxygen-evolving complex and a large number of cofactors. It forms dimeric complexes.</text>
</comment>
<comment type="subcellular location">
    <subcellularLocation>
        <location evidence="1">Plastid</location>
        <location evidence="1">Chloroplast thylakoid membrane</location>
        <topology evidence="1">Single-pass membrane protein</topology>
    </subcellularLocation>
</comment>
<comment type="similarity">
    <text evidence="1">Belongs to the PsbI family.</text>
</comment>
<accession>Q8M9Z9</accession>
<geneLocation type="chloroplast"/>
<proteinExistence type="inferred from homology"/>